<protein>
    <recommendedName>
        <fullName evidence="2">tRNA (guanine-N(7)-)-methyltransferase</fullName>
        <ecNumber evidence="2">2.1.1.33</ecNumber>
    </recommendedName>
    <alternativeName>
        <fullName evidence="2">tRNA (guanine(46)-N(7))-methyltransferase</fullName>
    </alternativeName>
    <alternativeName>
        <fullName evidence="2">tRNA(m7G46)-methyltransferase</fullName>
    </alternativeName>
</protein>
<name>TRMB_NOCFA</name>
<gene>
    <name evidence="2" type="primary">trmB</name>
    <name type="ordered locus">NFA_54840</name>
</gene>
<accession>Q5YNA5</accession>
<keyword id="KW-0489">Methyltransferase</keyword>
<keyword id="KW-1185">Reference proteome</keyword>
<keyword id="KW-0949">S-adenosyl-L-methionine</keyword>
<keyword id="KW-0808">Transferase</keyword>
<keyword id="KW-0819">tRNA processing</keyword>
<dbReference type="EC" id="2.1.1.33" evidence="2"/>
<dbReference type="EMBL" id="AP006618">
    <property type="protein sequence ID" value="BAD60336.1"/>
    <property type="molecule type" value="Genomic_DNA"/>
</dbReference>
<dbReference type="RefSeq" id="WP_011212018.1">
    <property type="nucleotide sequence ID" value="NC_006361.1"/>
</dbReference>
<dbReference type="SMR" id="Q5YNA5"/>
<dbReference type="STRING" id="247156.NFA_54840"/>
<dbReference type="GeneID" id="61136053"/>
<dbReference type="KEGG" id="nfa:NFA_54840"/>
<dbReference type="eggNOG" id="COG0220">
    <property type="taxonomic scope" value="Bacteria"/>
</dbReference>
<dbReference type="HOGENOM" id="CLU_050910_0_2_11"/>
<dbReference type="OrthoDB" id="9802090at2"/>
<dbReference type="UniPathway" id="UPA00989"/>
<dbReference type="Proteomes" id="UP000006820">
    <property type="component" value="Chromosome"/>
</dbReference>
<dbReference type="GO" id="GO:0043527">
    <property type="term" value="C:tRNA methyltransferase complex"/>
    <property type="evidence" value="ECO:0007669"/>
    <property type="project" value="TreeGrafter"/>
</dbReference>
<dbReference type="GO" id="GO:0008176">
    <property type="term" value="F:tRNA (guanine(46)-N7)-methyltransferase activity"/>
    <property type="evidence" value="ECO:0007669"/>
    <property type="project" value="UniProtKB-UniRule"/>
</dbReference>
<dbReference type="Gene3D" id="3.40.50.150">
    <property type="entry name" value="Vaccinia Virus protein VP39"/>
    <property type="match status" value="1"/>
</dbReference>
<dbReference type="HAMAP" id="MF_01057">
    <property type="entry name" value="tRNA_methyltr_TrmB"/>
    <property type="match status" value="1"/>
</dbReference>
<dbReference type="InterPro" id="IPR029063">
    <property type="entry name" value="SAM-dependent_MTases_sf"/>
</dbReference>
<dbReference type="InterPro" id="IPR003358">
    <property type="entry name" value="tRNA_(Gua-N-7)_MeTrfase_Trmb"/>
</dbReference>
<dbReference type="InterPro" id="IPR055361">
    <property type="entry name" value="tRNA_methyltr_TrmB_bact"/>
</dbReference>
<dbReference type="NCBIfam" id="TIGR00091">
    <property type="entry name" value="tRNA (guanosine(46)-N7)-methyltransferase TrmB"/>
    <property type="match status" value="1"/>
</dbReference>
<dbReference type="PANTHER" id="PTHR23417">
    <property type="entry name" value="3-DEOXY-D-MANNO-OCTULOSONIC-ACID TRANSFERASE/TRNA GUANINE-N 7 - -METHYLTRANSFERASE"/>
    <property type="match status" value="1"/>
</dbReference>
<dbReference type="PANTHER" id="PTHR23417:SF14">
    <property type="entry name" value="PENTACOTRIPEPTIDE-REPEAT REGION OF PRORP DOMAIN-CONTAINING PROTEIN"/>
    <property type="match status" value="1"/>
</dbReference>
<dbReference type="Pfam" id="PF02390">
    <property type="entry name" value="Methyltransf_4"/>
    <property type="match status" value="1"/>
</dbReference>
<dbReference type="SUPFAM" id="SSF53335">
    <property type="entry name" value="S-adenosyl-L-methionine-dependent methyltransferases"/>
    <property type="match status" value="1"/>
</dbReference>
<dbReference type="PROSITE" id="PS51625">
    <property type="entry name" value="SAM_MT_TRMB"/>
    <property type="match status" value="1"/>
</dbReference>
<proteinExistence type="inferred from homology"/>
<reference key="1">
    <citation type="journal article" date="2004" name="Proc. Natl. Acad. Sci. U.S.A.">
        <title>The complete genomic sequence of Nocardia farcinica IFM 10152.</title>
        <authorList>
            <person name="Ishikawa J."/>
            <person name="Yamashita A."/>
            <person name="Mikami Y."/>
            <person name="Hoshino Y."/>
            <person name="Kurita H."/>
            <person name="Hotta K."/>
            <person name="Shiba T."/>
            <person name="Hattori M."/>
        </authorList>
    </citation>
    <scope>NUCLEOTIDE SEQUENCE [LARGE SCALE GENOMIC DNA]</scope>
    <source>
        <strain>IFM 10152</strain>
    </source>
</reference>
<comment type="function">
    <text evidence="2">Catalyzes the formation of N(7)-methylguanine at position 46 (m7G46) in tRNA.</text>
</comment>
<comment type="catalytic activity">
    <reaction evidence="2">
        <text>guanosine(46) in tRNA + S-adenosyl-L-methionine = N(7)-methylguanosine(46) in tRNA + S-adenosyl-L-homocysteine</text>
        <dbReference type="Rhea" id="RHEA:42708"/>
        <dbReference type="Rhea" id="RHEA-COMP:10188"/>
        <dbReference type="Rhea" id="RHEA-COMP:10189"/>
        <dbReference type="ChEBI" id="CHEBI:57856"/>
        <dbReference type="ChEBI" id="CHEBI:59789"/>
        <dbReference type="ChEBI" id="CHEBI:74269"/>
        <dbReference type="ChEBI" id="CHEBI:74480"/>
        <dbReference type="EC" id="2.1.1.33"/>
    </reaction>
</comment>
<comment type="pathway">
    <text evidence="2">tRNA modification; N(7)-methylguanine-tRNA biosynthesis.</text>
</comment>
<comment type="similarity">
    <text evidence="2">Belongs to the class I-like SAM-binding methyltransferase superfamily. TrmB family.</text>
</comment>
<sequence>MDGVNDAANHTVESVPGRPSTASAPLEAGRRSPTGSRLYPRVTSFRSRRGALTPNQQGAWDRMWPRIGREVGDEPLDADAWFGRQAPLVIEIGCGTGTATAAMAAAEPHVNLIGIEVYQPGLAQLVQRIERDGIDNIRLLRGDAVDVLEHMIAAESLTGVRVFFPDPWPKARHHKRRLLQPATVALIAGRLRPGGVLHVATDHAGYAEHIAAVGAAEPLLVGLNEATGGDDERARTLAPIGLDRPVTKFEDKAHRAGSAITEFVWGKIE</sequence>
<organism>
    <name type="scientific">Nocardia farcinica (strain IFM 10152)</name>
    <dbReference type="NCBI Taxonomy" id="247156"/>
    <lineage>
        <taxon>Bacteria</taxon>
        <taxon>Bacillati</taxon>
        <taxon>Actinomycetota</taxon>
        <taxon>Actinomycetes</taxon>
        <taxon>Mycobacteriales</taxon>
        <taxon>Nocardiaceae</taxon>
        <taxon>Nocardia</taxon>
    </lineage>
</organism>
<evidence type="ECO:0000250" key="1"/>
<evidence type="ECO:0000255" key="2">
    <source>
        <dbReference type="HAMAP-Rule" id="MF_01057"/>
    </source>
</evidence>
<evidence type="ECO:0000256" key="3">
    <source>
        <dbReference type="SAM" id="MobiDB-lite"/>
    </source>
</evidence>
<feature type="chain" id="PRO_0000171365" description="tRNA (guanine-N(7)-)-methyltransferase">
    <location>
        <begin position="1"/>
        <end position="269"/>
    </location>
</feature>
<feature type="region of interest" description="Disordered" evidence="3">
    <location>
        <begin position="1"/>
        <end position="38"/>
    </location>
</feature>
<feature type="active site" evidence="1">
    <location>
        <position position="166"/>
    </location>
</feature>
<feature type="binding site" evidence="2">
    <location>
        <position position="91"/>
    </location>
    <ligand>
        <name>S-adenosyl-L-methionine</name>
        <dbReference type="ChEBI" id="CHEBI:59789"/>
    </ligand>
</feature>
<feature type="binding site" evidence="2">
    <location>
        <position position="116"/>
    </location>
    <ligand>
        <name>S-adenosyl-L-methionine</name>
        <dbReference type="ChEBI" id="CHEBI:59789"/>
    </ligand>
</feature>
<feature type="binding site" evidence="2">
    <location>
        <position position="143"/>
    </location>
    <ligand>
        <name>S-adenosyl-L-methionine</name>
        <dbReference type="ChEBI" id="CHEBI:59789"/>
    </ligand>
</feature>
<feature type="binding site" evidence="2">
    <location>
        <position position="166"/>
    </location>
    <ligand>
        <name>S-adenosyl-L-methionine</name>
        <dbReference type="ChEBI" id="CHEBI:59789"/>
    </ligand>
</feature>
<feature type="binding site" evidence="2">
    <location>
        <position position="170"/>
    </location>
    <ligand>
        <name>substrate</name>
    </ligand>
</feature>
<feature type="binding site" evidence="2">
    <location>
        <position position="202"/>
    </location>
    <ligand>
        <name>substrate</name>
    </ligand>
</feature>
<feature type="binding site" evidence="2">
    <location>
        <begin position="247"/>
        <end position="250"/>
    </location>
    <ligand>
        <name>substrate</name>
    </ligand>
</feature>